<keyword id="KW-1185">Reference proteome</keyword>
<gene>
    <name type="ORF">SPBP8B7.32</name>
</gene>
<proteinExistence type="predicted"/>
<protein>
    <recommendedName>
        <fullName>Putative uncharacterized protein P8B7.32</fullName>
    </recommendedName>
</protein>
<name>YORW_SCHPO</name>
<organism>
    <name type="scientific">Schizosaccharomyces pombe (strain 972 / ATCC 24843)</name>
    <name type="common">Fission yeast</name>
    <dbReference type="NCBI Taxonomy" id="284812"/>
    <lineage>
        <taxon>Eukaryota</taxon>
        <taxon>Fungi</taxon>
        <taxon>Dikarya</taxon>
        <taxon>Ascomycota</taxon>
        <taxon>Taphrinomycotina</taxon>
        <taxon>Schizosaccharomycetes</taxon>
        <taxon>Schizosaccharomycetales</taxon>
        <taxon>Schizosaccharomycetaceae</taxon>
        <taxon>Schizosaccharomyces</taxon>
    </lineage>
</organism>
<dbReference type="EMBL" id="CU329671">
    <property type="protein sequence ID" value="CCD31382.1"/>
    <property type="molecule type" value="Genomic_DNA"/>
</dbReference>
<dbReference type="RefSeq" id="XP_004001730.1">
    <property type="nucleotide sequence ID" value="XM_004001681.1"/>
</dbReference>
<dbReference type="PaxDb" id="4896-SPBP8B7.32.1"/>
<dbReference type="EnsemblFungi" id="SPBP8B7.32.1">
    <property type="protein sequence ID" value="SPBP8B7.32.1:pep"/>
    <property type="gene ID" value="SPBP8B7.32"/>
</dbReference>
<dbReference type="PomBase" id="SPBP8B7.32"/>
<dbReference type="VEuPathDB" id="FungiDB:SPBP8B7.32"/>
<dbReference type="HOGENOM" id="CLU_2689220_0_0_1"/>
<dbReference type="InParanoid" id="G2TRR5"/>
<dbReference type="PRO" id="PR:G2TRR5"/>
<dbReference type="Proteomes" id="UP000002485">
    <property type="component" value="Chromosome II"/>
</dbReference>
<accession>G2TRR5</accession>
<sequence>MESNFLLFIVQQNLFDHYIISIVSNRIIGIRASTRKVEYQFFLAFKSFPSIMGRTSPKFHIINKHFLSLFKREK</sequence>
<reference key="1">
    <citation type="journal article" date="2002" name="Nature">
        <title>The genome sequence of Schizosaccharomyces pombe.</title>
        <authorList>
            <person name="Wood V."/>
            <person name="Gwilliam R."/>
            <person name="Rajandream M.A."/>
            <person name="Lyne M.H."/>
            <person name="Lyne R."/>
            <person name="Stewart A."/>
            <person name="Sgouros J.G."/>
            <person name="Peat N."/>
            <person name="Hayles J."/>
            <person name="Baker S.G."/>
            <person name="Basham D."/>
            <person name="Bowman S."/>
            <person name="Brooks K."/>
            <person name="Brown D."/>
            <person name="Brown S."/>
            <person name="Chillingworth T."/>
            <person name="Churcher C.M."/>
            <person name="Collins M."/>
            <person name="Connor R."/>
            <person name="Cronin A."/>
            <person name="Davis P."/>
            <person name="Feltwell T."/>
            <person name="Fraser A."/>
            <person name="Gentles S."/>
            <person name="Goble A."/>
            <person name="Hamlin N."/>
            <person name="Harris D.E."/>
            <person name="Hidalgo J."/>
            <person name="Hodgson G."/>
            <person name="Holroyd S."/>
            <person name="Hornsby T."/>
            <person name="Howarth S."/>
            <person name="Huckle E.J."/>
            <person name="Hunt S."/>
            <person name="Jagels K."/>
            <person name="James K.D."/>
            <person name="Jones L."/>
            <person name="Jones M."/>
            <person name="Leather S."/>
            <person name="McDonald S."/>
            <person name="McLean J."/>
            <person name="Mooney P."/>
            <person name="Moule S."/>
            <person name="Mungall K.L."/>
            <person name="Murphy L.D."/>
            <person name="Niblett D."/>
            <person name="Odell C."/>
            <person name="Oliver K."/>
            <person name="O'Neil S."/>
            <person name="Pearson D."/>
            <person name="Quail M.A."/>
            <person name="Rabbinowitsch E."/>
            <person name="Rutherford K.M."/>
            <person name="Rutter S."/>
            <person name="Saunders D."/>
            <person name="Seeger K."/>
            <person name="Sharp S."/>
            <person name="Skelton J."/>
            <person name="Simmonds M.N."/>
            <person name="Squares R."/>
            <person name="Squares S."/>
            <person name="Stevens K."/>
            <person name="Taylor K."/>
            <person name="Taylor R.G."/>
            <person name="Tivey A."/>
            <person name="Walsh S.V."/>
            <person name="Warren T."/>
            <person name="Whitehead S."/>
            <person name="Woodward J.R."/>
            <person name="Volckaert G."/>
            <person name="Aert R."/>
            <person name="Robben J."/>
            <person name="Grymonprez B."/>
            <person name="Weltjens I."/>
            <person name="Vanstreels E."/>
            <person name="Rieger M."/>
            <person name="Schaefer M."/>
            <person name="Mueller-Auer S."/>
            <person name="Gabel C."/>
            <person name="Fuchs M."/>
            <person name="Duesterhoeft A."/>
            <person name="Fritzc C."/>
            <person name="Holzer E."/>
            <person name="Moestl D."/>
            <person name="Hilbert H."/>
            <person name="Borzym K."/>
            <person name="Langer I."/>
            <person name="Beck A."/>
            <person name="Lehrach H."/>
            <person name="Reinhardt R."/>
            <person name="Pohl T.M."/>
            <person name="Eger P."/>
            <person name="Zimmermann W."/>
            <person name="Wedler H."/>
            <person name="Wambutt R."/>
            <person name="Purnelle B."/>
            <person name="Goffeau A."/>
            <person name="Cadieu E."/>
            <person name="Dreano S."/>
            <person name="Gloux S."/>
            <person name="Lelaure V."/>
            <person name="Mottier S."/>
            <person name="Galibert F."/>
            <person name="Aves S.J."/>
            <person name="Xiang Z."/>
            <person name="Hunt C."/>
            <person name="Moore K."/>
            <person name="Hurst S.M."/>
            <person name="Lucas M."/>
            <person name="Rochet M."/>
            <person name="Gaillardin C."/>
            <person name="Tallada V.A."/>
            <person name="Garzon A."/>
            <person name="Thode G."/>
            <person name="Daga R.R."/>
            <person name="Cruzado L."/>
            <person name="Jimenez J."/>
            <person name="Sanchez M."/>
            <person name="del Rey F."/>
            <person name="Benito J."/>
            <person name="Dominguez A."/>
            <person name="Revuelta J.L."/>
            <person name="Moreno S."/>
            <person name="Armstrong J."/>
            <person name="Forsburg S.L."/>
            <person name="Cerutti L."/>
            <person name="Lowe T."/>
            <person name="McCombie W.R."/>
            <person name="Paulsen I."/>
            <person name="Potashkin J."/>
            <person name="Shpakovski G.V."/>
            <person name="Ussery D."/>
            <person name="Barrell B.G."/>
            <person name="Nurse P."/>
        </authorList>
    </citation>
    <scope>NUCLEOTIDE SEQUENCE [LARGE SCALE GENOMIC DNA]</scope>
    <source>
        <strain>972 / ATCC 24843</strain>
    </source>
</reference>
<reference key="2">
    <citation type="journal article" date="2011" name="Science">
        <title>Comparative functional genomics of the fission yeasts.</title>
        <authorList>
            <person name="Rhind N."/>
            <person name="Chen Z."/>
            <person name="Yassour M."/>
            <person name="Thompson D.A."/>
            <person name="Haas B.J."/>
            <person name="Habib N."/>
            <person name="Wapinski I."/>
            <person name="Roy S."/>
            <person name="Lin M.F."/>
            <person name="Heiman D.I."/>
            <person name="Young S.K."/>
            <person name="Furuya K."/>
            <person name="Guo Y."/>
            <person name="Pidoux A."/>
            <person name="Chen H.M."/>
            <person name="Robbertse B."/>
            <person name="Goldberg J.M."/>
            <person name="Aoki K."/>
            <person name="Bayne E.H."/>
            <person name="Berlin A.M."/>
            <person name="Desjardins C.A."/>
            <person name="Dobbs E."/>
            <person name="Dukaj L."/>
            <person name="Fan L."/>
            <person name="FitzGerald M.G."/>
            <person name="French C."/>
            <person name="Gujja S."/>
            <person name="Hansen K."/>
            <person name="Keifenheim D."/>
            <person name="Levin J.Z."/>
            <person name="Mosher R.A."/>
            <person name="Mueller C.A."/>
            <person name="Pfiffner J."/>
            <person name="Priest M."/>
            <person name="Russ C."/>
            <person name="Smialowska A."/>
            <person name="Swoboda P."/>
            <person name="Sykes S.M."/>
            <person name="Vaughn M."/>
            <person name="Vengrova S."/>
            <person name="Yoder R."/>
            <person name="Zeng Q."/>
            <person name="Allshire R."/>
            <person name="Baulcombe D."/>
            <person name="Birren B.W."/>
            <person name="Brown W."/>
            <person name="Ekwall K."/>
            <person name="Kellis M."/>
            <person name="Leatherwood J."/>
            <person name="Levin H."/>
            <person name="Margalit H."/>
            <person name="Martienssen R."/>
            <person name="Nieduszynski C.A."/>
            <person name="Spatafora J.W."/>
            <person name="Friedman N."/>
            <person name="Dalgaard J.Z."/>
            <person name="Baumann P."/>
            <person name="Niki H."/>
            <person name="Regev A."/>
            <person name="Nusbaum C."/>
        </authorList>
    </citation>
    <scope>IDENTIFICATION</scope>
</reference>
<feature type="chain" id="PRO_0000416659" description="Putative uncharacterized protein P8B7.32">
    <location>
        <begin position="1"/>
        <end position="74"/>
    </location>
</feature>